<feature type="signal peptide" evidence="1">
    <location>
        <begin position="1"/>
        <end position="25"/>
    </location>
</feature>
<feature type="chain" id="PRO_1000050120" description="Flagellar P-ring protein">
    <location>
        <begin position="26"/>
        <end position="331"/>
    </location>
</feature>
<accession>A5IM44</accession>
<keyword id="KW-0975">Bacterial flagellum</keyword>
<keyword id="KW-0574">Periplasm</keyword>
<keyword id="KW-0732">Signal</keyword>
<comment type="function">
    <text evidence="1">Assembles around the rod to form the L-ring and probably protects the motor/basal body from shearing forces during rotation.</text>
</comment>
<comment type="subunit">
    <text evidence="1">The basal body constitutes a major portion of the flagellar organelle and consists of four rings (L,P,S, and M) mounted on a central rod.</text>
</comment>
<comment type="subcellular location">
    <subcellularLocation>
        <location evidence="1">Periplasm</location>
    </subcellularLocation>
    <subcellularLocation>
        <location evidence="1">Bacterial flagellum basal body</location>
    </subcellularLocation>
</comment>
<comment type="similarity">
    <text evidence="1">Belongs to the FlgI family.</text>
</comment>
<sequence length="331" mass="35432">MKKRLAVLLVIVLTITFSFSVTTRIKDIAFFRGARDNQLFGIGLVVGLNGTGDSGNVNSPLLLEMMKKFGVQVSENDLKSKNTALVMVLADIPPFAKEGMRIDCVVASIADAKSLAGGYLLQTPLYGADGKVYAVAQGSVIIGGEDVKLSSNLQKRYRVVGYLPEGAIVERDIPSDMLDGDSVTILLRQPDITTAARVARAINEKFEMDLAKAIDPSAIKLTVPNAFQDDLITFLSLVEEIEVQPDVPARIVVNERTGTVLFGGDVKLSDFVISYGNFTISVTGGKIGDKDATISNLVSALKAAGATPQDIIAILQVIYESGYITGELIIM</sequence>
<protein>
    <recommendedName>
        <fullName evidence="1">Flagellar P-ring protein</fullName>
    </recommendedName>
    <alternativeName>
        <fullName evidence="1">Basal body P-ring protein</fullName>
    </alternativeName>
</protein>
<evidence type="ECO:0000255" key="1">
    <source>
        <dbReference type="HAMAP-Rule" id="MF_00416"/>
    </source>
</evidence>
<reference key="1">
    <citation type="submission" date="2007-05" db="EMBL/GenBank/DDBJ databases">
        <title>Complete sequence of Thermotoga petrophila RKU-1.</title>
        <authorList>
            <consortium name="US DOE Joint Genome Institute"/>
            <person name="Copeland A."/>
            <person name="Lucas S."/>
            <person name="Lapidus A."/>
            <person name="Barry K."/>
            <person name="Glavina del Rio T."/>
            <person name="Dalin E."/>
            <person name="Tice H."/>
            <person name="Pitluck S."/>
            <person name="Sims D."/>
            <person name="Brettin T."/>
            <person name="Bruce D."/>
            <person name="Detter J.C."/>
            <person name="Han C."/>
            <person name="Tapia R."/>
            <person name="Schmutz J."/>
            <person name="Larimer F."/>
            <person name="Land M."/>
            <person name="Hauser L."/>
            <person name="Kyrpides N."/>
            <person name="Mikhailova N."/>
            <person name="Nelson K."/>
            <person name="Gogarten J.P."/>
            <person name="Noll K."/>
            <person name="Richardson P."/>
        </authorList>
    </citation>
    <scope>NUCLEOTIDE SEQUENCE [LARGE SCALE GENOMIC DNA]</scope>
    <source>
        <strain>ATCC BAA-488 / DSM 13995 / JCM 10881 / RKU-1</strain>
    </source>
</reference>
<proteinExistence type="inferred from homology"/>
<gene>
    <name evidence="1" type="primary">flgI</name>
    <name type="ordered locus">Tpet_1253</name>
</gene>
<organism>
    <name type="scientific">Thermotoga petrophila (strain ATCC BAA-488 / DSM 13995 / JCM 10881 / RKU-1)</name>
    <dbReference type="NCBI Taxonomy" id="390874"/>
    <lineage>
        <taxon>Bacteria</taxon>
        <taxon>Thermotogati</taxon>
        <taxon>Thermotogota</taxon>
        <taxon>Thermotogae</taxon>
        <taxon>Thermotogales</taxon>
        <taxon>Thermotogaceae</taxon>
        <taxon>Thermotoga</taxon>
    </lineage>
</organism>
<name>FLGI_THEP1</name>
<dbReference type="EMBL" id="CP000702">
    <property type="protein sequence ID" value="ABQ47267.1"/>
    <property type="molecule type" value="Genomic_DNA"/>
</dbReference>
<dbReference type="RefSeq" id="WP_011943753.1">
    <property type="nucleotide sequence ID" value="NC_009486.1"/>
</dbReference>
<dbReference type="SMR" id="A5IM44"/>
<dbReference type="STRING" id="390874.Tpet_1253"/>
<dbReference type="KEGG" id="tpt:Tpet_1253"/>
<dbReference type="eggNOG" id="COG1706">
    <property type="taxonomic scope" value="Bacteria"/>
</dbReference>
<dbReference type="HOGENOM" id="CLU_045235_1_0_0"/>
<dbReference type="Proteomes" id="UP000006558">
    <property type="component" value="Chromosome"/>
</dbReference>
<dbReference type="GO" id="GO:0009428">
    <property type="term" value="C:bacterial-type flagellum basal body, distal rod, P ring"/>
    <property type="evidence" value="ECO:0007669"/>
    <property type="project" value="InterPro"/>
</dbReference>
<dbReference type="GO" id="GO:0030288">
    <property type="term" value="C:outer membrane-bounded periplasmic space"/>
    <property type="evidence" value="ECO:0007669"/>
    <property type="project" value="InterPro"/>
</dbReference>
<dbReference type="GO" id="GO:0005198">
    <property type="term" value="F:structural molecule activity"/>
    <property type="evidence" value="ECO:0007669"/>
    <property type="project" value="InterPro"/>
</dbReference>
<dbReference type="GO" id="GO:0071973">
    <property type="term" value="P:bacterial-type flagellum-dependent cell motility"/>
    <property type="evidence" value="ECO:0007669"/>
    <property type="project" value="InterPro"/>
</dbReference>
<dbReference type="HAMAP" id="MF_00416">
    <property type="entry name" value="FlgI"/>
    <property type="match status" value="1"/>
</dbReference>
<dbReference type="InterPro" id="IPR001782">
    <property type="entry name" value="Flag_FlgI"/>
</dbReference>
<dbReference type="NCBIfam" id="NF003676">
    <property type="entry name" value="PRK05303.1"/>
    <property type="match status" value="1"/>
</dbReference>
<dbReference type="PANTHER" id="PTHR30381">
    <property type="entry name" value="FLAGELLAR P-RING PERIPLASMIC PROTEIN FLGI"/>
    <property type="match status" value="1"/>
</dbReference>
<dbReference type="PANTHER" id="PTHR30381:SF0">
    <property type="entry name" value="FLAGELLAR P-RING PROTEIN"/>
    <property type="match status" value="1"/>
</dbReference>
<dbReference type="Pfam" id="PF02119">
    <property type="entry name" value="FlgI"/>
    <property type="match status" value="2"/>
</dbReference>
<dbReference type="PRINTS" id="PR01010">
    <property type="entry name" value="FLGPRINGFLGI"/>
</dbReference>